<protein>
    <recommendedName>
        <fullName evidence="6">UDP-glucuronosyltransferase 2B15</fullName>
        <shortName>UDPGT 2B15</shortName>
        <shortName>UGT2B15</shortName>
        <ecNumber evidence="4">2.4.1.17</ecNumber>
    </recommendedName>
    <alternativeName>
        <fullName>UDP-glucuronosyltransferase 2B36</fullName>
        <shortName>UDPGT 2B36</shortName>
    </alternativeName>
</protein>
<organism>
    <name type="scientific">Rattus norvegicus</name>
    <name type="common">Rat</name>
    <dbReference type="NCBI Taxonomy" id="10116"/>
    <lineage>
        <taxon>Eukaryota</taxon>
        <taxon>Metazoa</taxon>
        <taxon>Chordata</taxon>
        <taxon>Craniata</taxon>
        <taxon>Vertebrata</taxon>
        <taxon>Euteleostomi</taxon>
        <taxon>Mammalia</taxon>
        <taxon>Eutheria</taxon>
        <taxon>Euarchontoglires</taxon>
        <taxon>Glires</taxon>
        <taxon>Rodentia</taxon>
        <taxon>Myomorpha</taxon>
        <taxon>Muroidea</taxon>
        <taxon>Muridae</taxon>
        <taxon>Murinae</taxon>
        <taxon>Rattus</taxon>
    </lineage>
</organism>
<sequence>MSGKWISALLLLQISFCFKSGNCGKVLVWPMEYSHWMNIKIILEELVQKGHEVTVLRPSAFVFLDPKETSDLKFVTFPTSFSSHDLENFFTRFVNVWTYELPRDTCLSYFLYLQDTIDEYSDYCLTVCKEAVSNKQFMTKLQESKFDVVFSDAIGPCGELIAELLQIPFLYSLRFSPGYTIEQYIGGVLFPPSYVPMIFSGLAGQMTFIERVHNMICMLYFDFWFQTFREKKWDPFYSKTLGRPTTLAEIMGKAEMWLIRSYWDLEFPHPISPNVDYIGGLHCKPAKPLPKDIEDFVQSSGEHGVVVFSLGSMVRNMTEEKANIIAWALAQIPQKVLWRFDGKKPPTLGPNTRLYKWLPQNDLLGHPKTKAFVTHGGANGIYEAIHHGIPMIGIPLFAEQHDNIAHMVAKGAAVEVNFRTMSKSDLLNALEEVIDNPFYKKNAMWLSTIHHDQPTKPLDRAVFWIEFVMRHKGAKHLRSLGHNLPWYQYHSLDVIGFLLSCVAVTVVLALKCFLFVYRFFVKKEKKTKNE</sequence>
<keyword id="KW-0903">Direct protein sequencing</keyword>
<keyword id="KW-0256">Endoplasmic reticulum</keyword>
<keyword id="KW-0325">Glycoprotein</keyword>
<keyword id="KW-0328">Glycosyltransferase</keyword>
<keyword id="KW-0443">Lipid metabolism</keyword>
<keyword id="KW-0472">Membrane</keyword>
<keyword id="KW-1185">Reference proteome</keyword>
<keyword id="KW-0732">Signal</keyword>
<keyword id="KW-0753">Steroid metabolism</keyword>
<keyword id="KW-0808">Transferase</keyword>
<keyword id="KW-0812">Transmembrane</keyword>
<keyword id="KW-1133">Transmembrane helix</keyword>
<name>UDB15_RAT</name>
<proteinExistence type="evidence at protein level"/>
<evidence type="ECO:0000250" key="1">
    <source>
        <dbReference type="UniProtKB" id="P54855"/>
    </source>
</evidence>
<evidence type="ECO:0000255" key="2"/>
<evidence type="ECO:0000269" key="3">
    <source>
    </source>
</evidence>
<evidence type="ECO:0000269" key="4">
    <source>
    </source>
</evidence>
<evidence type="ECO:0000269" key="5">
    <source ref="2"/>
</evidence>
<evidence type="ECO:0000305" key="6"/>
<evidence type="ECO:0000312" key="7">
    <source>
        <dbReference type="RGD" id="620895"/>
    </source>
</evidence>
<reference key="1">
    <citation type="journal article" date="1995" name="Arch. Biochem. Biophys.">
        <title>Cloning and expression of a rat liver phenobarbital-inducible UDP-glucuronosyltransferase (2B12) with specificity for monoterpenoid alcohols.</title>
        <authorList>
            <person name="Green M.D."/>
            <person name="Clarke D.J."/>
            <person name="Oturu E.M."/>
            <person name="Styczynski P.B."/>
            <person name="Jackson M.R."/>
            <person name="Burchell B."/>
            <person name="Tephly T.R."/>
        </authorList>
    </citation>
    <scope>NUCLEOTIDE SEQUENCE [MRNA]</scope>
    <scope>FUNCTION</scope>
    <scope>CATALYTIC ACTIVITY</scope>
    <scope>BIOPHYSICOCHEMICAL PROPERTIES</scope>
    <scope>TISSUE SPECIFICITY</scope>
    <scope>INDUCTION</scope>
    <source>
        <strain>Sprague-Dawley</strain>
        <tissue>Liver</tissue>
    </source>
</reference>
<reference key="2">
    <citation type="submission" date="1994-02" db="EMBL/GenBank/DDBJ databases">
        <authorList>
            <person name="Green M.D."/>
        </authorList>
    </citation>
    <scope>NUCLEOTIDE SEQUENCE [MRNA]</scope>
    <source>
        <strain>Sprague-Dawley</strain>
        <tissue>Kidney</tissue>
    </source>
</reference>
<reference key="3">
    <citation type="journal article" date="1991" name="Mol. Pharmacol.">
        <title>Purification and properties of a rat liver phenobarbital-inducible 4-hydroxybiphenyl UDP-glucuronosyltransferase.</title>
        <authorList>
            <person name="Styczynski P.B."/>
            <person name="Green M.S."/>
            <person name="Puig J."/>
            <person name="Coffman B.L."/>
            <person name="Tephly T.R."/>
        </authorList>
    </citation>
    <scope>PROTEIN SEQUENCE OF 24-38</scope>
    <scope>CHARACTERIZATION</scope>
    <source>
        <strain>Wistar</strain>
        <tissue>Liver</tissue>
    </source>
</reference>
<feature type="signal peptide" evidence="3">
    <location>
        <begin position="1"/>
        <end position="23"/>
    </location>
</feature>
<feature type="chain" id="PRO_0000036036" description="UDP-glucuronosyltransferase 2B15">
    <location>
        <begin position="24"/>
        <end position="530"/>
    </location>
</feature>
<feature type="transmembrane region" description="Helical" evidence="2">
    <location>
        <begin position="494"/>
        <end position="510"/>
    </location>
</feature>
<feature type="glycosylation site" description="N-linked (GlcNAc...) asparagine" evidence="2">
    <location>
        <position position="316"/>
    </location>
</feature>
<feature type="sequence variant" description="In kidney." evidence="5">
    <original>S</original>
    <variation>P</variation>
    <location>
        <position position="2"/>
    </location>
</feature>
<feature type="sequence variant" description="In kidney." evidence="5">
    <original>F</original>
    <variation>S</variation>
    <location>
        <position position="61"/>
    </location>
</feature>
<feature type="sequence variant" description="In kidney." evidence="5">
    <original>D</original>
    <variation>H</variation>
    <location>
        <position position="71"/>
    </location>
</feature>
<feature type="sequence variant" description="In kidney." evidence="5">
    <original>N</original>
    <variation>S</variation>
    <location>
        <position position="95"/>
    </location>
</feature>
<feature type="sequence variant" description="In kidney." evidence="5">
    <original>Q</original>
    <variation>K</variation>
    <location>
        <position position="183"/>
    </location>
</feature>
<feature type="sequence variant" description="In kidney." evidence="5">
    <original>P</original>
    <variation>T</variation>
    <location>
        <position position="346"/>
    </location>
</feature>
<feature type="sequence variant" description="In kidney." evidence="5">
    <original>A</original>
    <variation>G</variation>
    <location>
        <position position="398"/>
    </location>
</feature>
<feature type="sequence variant" description="In kidney." evidence="5">
    <original>VE</original>
    <variation>AT</variation>
    <location>
        <begin position="414"/>
        <end position="415"/>
    </location>
</feature>
<feature type="sequence variant" description="In kidney." evidence="5">
    <original>V</original>
    <variation>D</variation>
    <location>
        <position position="433"/>
    </location>
</feature>
<feature type="sequence variant" description="In kidney." evidence="5">
    <original>K</original>
    <variation>L</variation>
    <location>
        <position position="475"/>
    </location>
</feature>
<feature type="sequence variant" description="In kidney." evidence="5">
    <original>Q</original>
    <variation>L</variation>
    <location>
        <position position="488"/>
    </location>
</feature>
<gene>
    <name evidence="7" type="primary">Ugt2b15</name>
    <name type="synonym">Ugt2b12</name>
    <name type="synonym">Ugt2b36</name>
    <name type="synonym">Ugt2b4</name>
</gene>
<dbReference type="EC" id="2.4.1.17" evidence="4"/>
<dbReference type="EMBL" id="U06273">
    <property type="protein sequence ID" value="AAA83404.1"/>
    <property type="molecule type" value="mRNA"/>
</dbReference>
<dbReference type="EMBL" id="U06274">
    <property type="protein sequence ID" value="AAA83405.1"/>
    <property type="molecule type" value="mRNA"/>
</dbReference>
<dbReference type="PIR" id="S68200">
    <property type="entry name" value="S68200"/>
</dbReference>
<dbReference type="SMR" id="P36511"/>
<dbReference type="FunCoup" id="P36511">
    <property type="interactions" value="3"/>
</dbReference>
<dbReference type="IntAct" id="P36511">
    <property type="interactions" value="1"/>
</dbReference>
<dbReference type="STRING" id="10116.ENSRNOP00000002712"/>
<dbReference type="CAZy" id="GT1">
    <property type="family name" value="Glycosyltransferase Family 1"/>
</dbReference>
<dbReference type="GlyCosmos" id="P36511">
    <property type="glycosylation" value="1 site, No reported glycans"/>
</dbReference>
<dbReference type="GlyGen" id="P36511">
    <property type="glycosylation" value="1 site"/>
</dbReference>
<dbReference type="iPTMnet" id="P36511"/>
<dbReference type="PhosphoSitePlus" id="P36511"/>
<dbReference type="PaxDb" id="10116-ENSRNOP00000002712"/>
<dbReference type="UCSC" id="RGD:620895">
    <property type="organism name" value="rat"/>
</dbReference>
<dbReference type="AGR" id="RGD:620895"/>
<dbReference type="RGD" id="620895">
    <property type="gene designation" value="Ugt2b36"/>
</dbReference>
<dbReference type="eggNOG" id="KOG1192">
    <property type="taxonomic scope" value="Eukaryota"/>
</dbReference>
<dbReference type="InParanoid" id="P36511"/>
<dbReference type="PhylomeDB" id="P36511"/>
<dbReference type="BRENDA" id="2.4.1.17">
    <property type="organism ID" value="5301"/>
</dbReference>
<dbReference type="Reactome" id="R-RNO-156588">
    <property type="pathway name" value="Glucuronidation"/>
</dbReference>
<dbReference type="Reactome" id="R-RNO-9749641">
    <property type="pathway name" value="Aspirin ADME"/>
</dbReference>
<dbReference type="Reactome" id="R-RNO-9753281">
    <property type="pathway name" value="Paracetamol ADME"/>
</dbReference>
<dbReference type="Reactome" id="R-RNO-9757110">
    <property type="pathway name" value="Prednisone ADME"/>
</dbReference>
<dbReference type="PRO" id="PR:P36511"/>
<dbReference type="Proteomes" id="UP000002494">
    <property type="component" value="Unplaced"/>
</dbReference>
<dbReference type="GO" id="GO:0005789">
    <property type="term" value="C:endoplasmic reticulum membrane"/>
    <property type="evidence" value="ECO:0007669"/>
    <property type="project" value="UniProtKB-SubCell"/>
</dbReference>
<dbReference type="GO" id="GO:0015020">
    <property type="term" value="F:glucuronosyltransferase activity"/>
    <property type="evidence" value="ECO:0000318"/>
    <property type="project" value="GO_Central"/>
</dbReference>
<dbReference type="GO" id="GO:0008210">
    <property type="term" value="P:estrogen metabolic process"/>
    <property type="evidence" value="ECO:0000250"/>
    <property type="project" value="UniProtKB"/>
</dbReference>
<dbReference type="GO" id="GO:0009410">
    <property type="term" value="P:response to xenobiotic stimulus"/>
    <property type="evidence" value="ECO:0000270"/>
    <property type="project" value="RGD"/>
</dbReference>
<dbReference type="CDD" id="cd03784">
    <property type="entry name" value="GT1_Gtf-like"/>
    <property type="match status" value="1"/>
</dbReference>
<dbReference type="FunFam" id="3.40.50.2000:FF:000001">
    <property type="entry name" value="UDP-glucuronosyltransferase"/>
    <property type="match status" value="1"/>
</dbReference>
<dbReference type="FunFam" id="3.40.50.2000:FF:000081">
    <property type="entry name" value="UDP-glucuronosyltransferase 2A2"/>
    <property type="match status" value="1"/>
</dbReference>
<dbReference type="Gene3D" id="3.40.50.2000">
    <property type="entry name" value="Glycogen Phosphorylase B"/>
    <property type="match status" value="2"/>
</dbReference>
<dbReference type="InterPro" id="IPR050271">
    <property type="entry name" value="UDP-glycosyltransferase"/>
</dbReference>
<dbReference type="InterPro" id="IPR002213">
    <property type="entry name" value="UDP_glucos_trans"/>
</dbReference>
<dbReference type="InterPro" id="IPR035595">
    <property type="entry name" value="UDP_glycos_trans_CS"/>
</dbReference>
<dbReference type="PANTHER" id="PTHR48043">
    <property type="entry name" value="EG:EG0003.4 PROTEIN-RELATED"/>
    <property type="match status" value="1"/>
</dbReference>
<dbReference type="PANTHER" id="PTHR48043:SF64">
    <property type="entry name" value="UDP-GLUCURONOSYLTRANSFERASE 2B15"/>
    <property type="match status" value="1"/>
</dbReference>
<dbReference type="Pfam" id="PF00201">
    <property type="entry name" value="UDPGT"/>
    <property type="match status" value="1"/>
</dbReference>
<dbReference type="SUPFAM" id="SSF53756">
    <property type="entry name" value="UDP-Glycosyltransferase/glycogen phosphorylase"/>
    <property type="match status" value="1"/>
</dbReference>
<dbReference type="PROSITE" id="PS00375">
    <property type="entry name" value="UDPGT"/>
    <property type="match status" value="1"/>
</dbReference>
<comment type="function">
    <text evidence="4">UDP-glucuronosyltransferase (UGT) that catalyzes phase II biotransformation reactions in which lipophilic substrates are conjugated with glucuronic acid to increase the metabolite's water solubility, thereby facilitating excretion into either the urine or bile (PubMed:7574722). Essential for the elimination and detoxification of drugs, xenobiotics and endogenous compounds (PubMed:7574722). Catalyzes the glucuronidation of endogenous steroid hormones such as androgens (testosterone, androsterone) and estrogens (estradiol, epiestradiol, estriol, catechol estrogens) (PubMed:7574722). Displays glucuronidation activity toward several classes of xenoblotic substrates, including phenolic compounds (eugenol, 4-nitrophenol, 4-hydroxybiphenyl) and phenylpropanoids (naringenin, coumarins) (PubMed:7574722). Catalyzes the glucuronidation of monoterpenoid alcohols such as borneol, menthol and isomenthol, a class of natural compounds used in essential oils (PubMed:7574722).</text>
</comment>
<comment type="catalytic activity">
    <reaction evidence="4">
        <text>glucuronate acceptor + UDP-alpha-D-glucuronate = acceptor beta-D-glucuronoside + UDP + H(+)</text>
        <dbReference type="Rhea" id="RHEA:21032"/>
        <dbReference type="ChEBI" id="CHEBI:15378"/>
        <dbReference type="ChEBI" id="CHEBI:58052"/>
        <dbReference type="ChEBI" id="CHEBI:58223"/>
        <dbReference type="ChEBI" id="CHEBI:132367"/>
        <dbReference type="ChEBI" id="CHEBI:132368"/>
        <dbReference type="EC" id="2.4.1.17"/>
    </reaction>
    <physiologicalReaction direction="left-to-right" evidence="4">
        <dbReference type="Rhea" id="RHEA:21033"/>
    </physiologicalReaction>
</comment>
<comment type="catalytic activity">
    <reaction evidence="1">
        <text>17alpha-estradiol + UDP-alpha-D-glucuronate = 17alpha-estradiol 3-O-(beta-D-glucuronate) + UDP + H(+)</text>
        <dbReference type="Rhea" id="RHEA:52868"/>
        <dbReference type="ChEBI" id="CHEBI:15378"/>
        <dbReference type="ChEBI" id="CHEBI:17160"/>
        <dbReference type="ChEBI" id="CHEBI:57529"/>
        <dbReference type="ChEBI" id="CHEBI:58052"/>
        <dbReference type="ChEBI" id="CHEBI:58223"/>
    </reaction>
    <physiologicalReaction direction="left-to-right" evidence="1">
        <dbReference type="Rhea" id="RHEA:52869"/>
    </physiologicalReaction>
</comment>
<comment type="catalytic activity">
    <reaction evidence="1">
        <text>16alpha,17alpha-estriol + UDP-alpha-D-glucuronate = 16alpha,17alpha-estriol 3-O-(beta-D-glucuronate) + UDP + H(+)</text>
        <dbReference type="Rhea" id="RHEA:52924"/>
        <dbReference type="ChEBI" id="CHEBI:15378"/>
        <dbReference type="ChEBI" id="CHEBI:42156"/>
        <dbReference type="ChEBI" id="CHEBI:58052"/>
        <dbReference type="ChEBI" id="CHEBI:58223"/>
        <dbReference type="ChEBI" id="CHEBI:136882"/>
    </reaction>
    <physiologicalReaction direction="left-to-right" evidence="1">
        <dbReference type="Rhea" id="RHEA:52925"/>
    </physiologicalReaction>
</comment>
<comment type="catalytic activity">
    <reaction evidence="1">
        <text>17beta-hydroxy-5alpha-androstan-3-one + UDP-alpha-D-glucuronate = 5alpha-dihydrotestosterone 17-O-(beta-D-glucuronate) + UDP + H(+)</text>
        <dbReference type="Rhea" id="RHEA:53000"/>
        <dbReference type="ChEBI" id="CHEBI:15378"/>
        <dbReference type="ChEBI" id="CHEBI:16330"/>
        <dbReference type="ChEBI" id="CHEBI:58052"/>
        <dbReference type="ChEBI" id="CHEBI:58223"/>
        <dbReference type="ChEBI" id="CHEBI:136914"/>
    </reaction>
    <physiologicalReaction direction="left-to-right" evidence="1">
        <dbReference type="Rhea" id="RHEA:53001"/>
    </physiologicalReaction>
</comment>
<comment type="biophysicochemical properties">
    <kinetics>
        <KM evidence="4">280 uM for UDP-alpha-D-glucuronate (when assaying glucuronidation with (1S,2R,4S)-borneol and 4-nitrophenol as substrates)</KM>
        <KM evidence="4">330 uM for UDP-alpha-D-glucuronate (when assaying glucuronidation with (1S,2R,4S)-borneol and 4-nitrophenol as substrates)</KM>
        <KM evidence="4">90 uM for 4-hydroxy-estrone</KM>
        <KM evidence="4">140 uM for 4-hydroxy-estrone</KM>
        <KM evidence="4">49 uM for naringenin</KM>
        <KM evidence="4">55 uM for naringenin</KM>
        <KM evidence="4">850 uM for 4-methylumbelliferone</KM>
        <KM evidence="4">260 uM for eugenol</KM>
        <KM evidence="4">1680 uM for 4-nitrophenol</KM>
        <KM evidence="4">51 uM for 2-hydroxybiphenyl</KM>
        <KM evidence="4">35 uM for 2-hydroxybiphenyl</KM>
        <KM evidence="4">36 uM for (1S,2R,4S)-borneol</KM>
        <KM evidence="4">10 uM for (+)-menthol</KM>
        <KM evidence="4">50 uM for (+)-isomenthol</KM>
        <KM evidence="4">585 uM for hexafluoro-2-propanol</KM>
        <KM evidence="4">644 uM for hexafluoro-2-propanol</KM>
        <Vmax evidence="4">140.0 pmol/min/mg enzyme for the formation of 4-hydroxy-estrone glucuronide</Vmax>
        <Vmax evidence="4">190.0 pmol/min/mg enzyme for the formation of 4-hydroxy-estrone glucuronide</Vmax>
        <Vmax evidence="4">117.0 pmol/min/mg enzyme for the formation of naringenin glucuronide</Vmax>
        <Vmax evidence="4">123.0 pmol/min/mg enzyme for the formation of naringenin glucuronide</Vmax>
        <Vmax evidence="4">137.0 pmol/min/mg enzyme for the formation of 4-methylumbelliferone glucuronide</Vmax>
        <Vmax evidence="4">265.0 pmol/min/mg enzyme for the formation of eugenol glucuronide</Vmax>
        <Vmax evidence="4">290.0 pmol/min/mg enzyme for the formation of 4-nitrophenol glucuronide</Vmax>
        <Vmax evidence="4">220.0 pmol/min/mg enzyme for the formation of 2-hydroxybiphenyl glucuronide</Vmax>
        <Vmax evidence="4">150.0 pmol/min/mg enzyme for the formation of 2-hydroxybiphenyl glucuronide</Vmax>
        <Vmax evidence="4">320.0 pmol/min/mg enzyme for the formation of (1S,2R,4S)-borneol glucuronide</Vmax>
        <Vmax evidence="4">9.0 pmol/min/mg enzyme for the formation of (+)-menthol glucuronide</Vmax>
        <Vmax evidence="4">110.0 pmol/min/mg enzyme for the formation of (+)-isomenthol glucuronide</Vmax>
        <Vmax evidence="4">280.0 pmol/min/mg enzyme for the formation of hexafluoro-2-propanol glucuronide</Vmax>
        <Vmax evidence="4">330.0 pmol/min/mg enzyme for the formation of hexafluoro-2-propanol glucuronide</Vmax>
    </kinetics>
</comment>
<comment type="subcellular location">
    <subcellularLocation>
        <location evidence="1">Endoplasmic reticulum membrane</location>
        <topology evidence="2">Single-pass membrane protein</topology>
    </subcellularLocation>
</comment>
<comment type="tissue specificity">
    <text evidence="4">Liver. Lower levels seen in the kidney and testis.</text>
</comment>
<comment type="induction">
    <text evidence="4">By phenobarbital.</text>
</comment>
<comment type="PTM">
    <text evidence="6">N-glycosylated.</text>
</comment>
<comment type="polymorphism">
    <text evidence="5">The sequence shown is that of the liver isozyme. The kidney isoform differs in 12 positions.</text>
</comment>
<comment type="similarity">
    <text evidence="6">Belongs to the UDP-glycosyltransferase family.</text>
</comment>
<accession>P36511</accession>